<reference key="1">
    <citation type="journal article" date="2008" name="Proc. Natl. Acad. Sci. U.S.A.">
        <title>Nitrogen fixation island and rhizosphere competence traits in the genome of root-associated Pseudomonas stutzeri A1501.</title>
        <authorList>
            <person name="Yan Y."/>
            <person name="Yang J."/>
            <person name="Dou Y."/>
            <person name="Chen M."/>
            <person name="Ping S."/>
            <person name="Peng J."/>
            <person name="Lu W."/>
            <person name="Zhang W."/>
            <person name="Yao Z."/>
            <person name="Li H."/>
            <person name="Liu W."/>
            <person name="He S."/>
            <person name="Geng L."/>
            <person name="Zhang X."/>
            <person name="Yang F."/>
            <person name="Yu H."/>
            <person name="Zhan Y."/>
            <person name="Li D."/>
            <person name="Lin Z."/>
            <person name="Wang Y."/>
            <person name="Elmerich C."/>
            <person name="Lin M."/>
            <person name="Jin Q."/>
        </authorList>
    </citation>
    <scope>NUCLEOTIDE SEQUENCE [LARGE SCALE GENOMIC DNA]</scope>
    <source>
        <strain>A1501</strain>
    </source>
</reference>
<sequence>MTTLMVQGTTSDAGKSTLVTALCRWLARQGVAVVPFKPQNMALNSAVTADGGEIGRAQAVQAQAANLAPHTDMNPVLLKPNSDIGAQVIVHGRAVTSMDAAAYHDYKRVALQAVLDSHRRLSAAYRVVMVEGAGSPAEINLRAGDIANMGFAEAVDCPVILIADIDKGGVFAHLVGTLALLSESEQARVQGFVINRFRGDIALLQPGLDWLEQRTGKPVLGVLPYLMDLHLEAEDAIDVRQAGKSAEVLKVVVPVLPRISNHTDFDPLRLHPQVDLQFVGPGQPVPSADLIILPGSKSVRADLAWLRANGWEAAIQKHLRYGGKLLGICGGLQMLGTRIADPLGLEGPAGESAGLGLLDFATVLEADKQLRNVQGRLLPEAVPVTGYEIHAGVSTGSALARPAVQLDDGRSDGAISADGQILGTYLHGLFESPDACAALLRWAGLEAVQQVDYHALRERDIERLADLVETHLDTAKLRRFCGLGG</sequence>
<proteinExistence type="inferred from homology"/>
<protein>
    <recommendedName>
        <fullName evidence="1">Cobyric acid synthase</fullName>
    </recommendedName>
</protein>
<comment type="function">
    <text evidence="1">Catalyzes amidations at positions B, D, E, and G on adenosylcobyrinic A,C-diamide. NH(2) groups are provided by glutamine, and one molecule of ATP is hydrogenolyzed for each amidation.</text>
</comment>
<comment type="pathway">
    <text evidence="1">Cofactor biosynthesis; adenosylcobalamin biosynthesis.</text>
</comment>
<comment type="similarity">
    <text evidence="1">Belongs to the CobB/CobQ family. CobQ subfamily.</text>
</comment>
<keyword id="KW-0169">Cobalamin biosynthesis</keyword>
<keyword id="KW-0315">Glutamine amidotransferase</keyword>
<keyword id="KW-1185">Reference proteome</keyword>
<organism>
    <name type="scientific">Stutzerimonas stutzeri (strain A1501)</name>
    <name type="common">Pseudomonas stutzeri</name>
    <dbReference type="NCBI Taxonomy" id="379731"/>
    <lineage>
        <taxon>Bacteria</taxon>
        <taxon>Pseudomonadati</taxon>
        <taxon>Pseudomonadota</taxon>
        <taxon>Gammaproteobacteria</taxon>
        <taxon>Pseudomonadales</taxon>
        <taxon>Pseudomonadaceae</taxon>
        <taxon>Stutzerimonas</taxon>
    </lineage>
</organism>
<feature type="chain" id="PRO_0000332375" description="Cobyric acid synthase">
    <location>
        <begin position="1"/>
        <end position="485"/>
    </location>
</feature>
<feature type="domain" description="GATase cobBQ-type" evidence="1">
    <location>
        <begin position="248"/>
        <end position="435"/>
    </location>
</feature>
<feature type="active site" description="Nucleophile" evidence="1">
    <location>
        <position position="329"/>
    </location>
</feature>
<feature type="active site" evidence="1">
    <location>
        <position position="427"/>
    </location>
</feature>
<evidence type="ECO:0000255" key="1">
    <source>
        <dbReference type="HAMAP-Rule" id="MF_00028"/>
    </source>
</evidence>
<name>COBQ_STUS1</name>
<dbReference type="EMBL" id="CP000304">
    <property type="protein sequence ID" value="ABP78991.1"/>
    <property type="molecule type" value="Genomic_DNA"/>
</dbReference>
<dbReference type="RefSeq" id="WP_011912475.1">
    <property type="nucleotide sequence ID" value="NC_009434.1"/>
</dbReference>
<dbReference type="SMR" id="A4VJ40"/>
<dbReference type="KEGG" id="psa:PST_1297"/>
<dbReference type="eggNOG" id="COG1492">
    <property type="taxonomic scope" value="Bacteria"/>
</dbReference>
<dbReference type="HOGENOM" id="CLU_019250_2_2_6"/>
<dbReference type="UniPathway" id="UPA00148"/>
<dbReference type="Proteomes" id="UP000000233">
    <property type="component" value="Chromosome"/>
</dbReference>
<dbReference type="GO" id="GO:0015420">
    <property type="term" value="F:ABC-type vitamin B12 transporter activity"/>
    <property type="evidence" value="ECO:0007669"/>
    <property type="project" value="UniProtKB-UniRule"/>
</dbReference>
<dbReference type="GO" id="GO:0003824">
    <property type="term" value="F:catalytic activity"/>
    <property type="evidence" value="ECO:0007669"/>
    <property type="project" value="InterPro"/>
</dbReference>
<dbReference type="GO" id="GO:0009236">
    <property type="term" value="P:cobalamin biosynthetic process"/>
    <property type="evidence" value="ECO:0007669"/>
    <property type="project" value="UniProtKB-UniRule"/>
</dbReference>
<dbReference type="CDD" id="cd05389">
    <property type="entry name" value="CobQ_N"/>
    <property type="match status" value="1"/>
</dbReference>
<dbReference type="CDD" id="cd01750">
    <property type="entry name" value="GATase1_CobQ"/>
    <property type="match status" value="1"/>
</dbReference>
<dbReference type="Gene3D" id="3.40.50.880">
    <property type="match status" value="1"/>
</dbReference>
<dbReference type="Gene3D" id="3.40.50.300">
    <property type="entry name" value="P-loop containing nucleotide triphosphate hydrolases"/>
    <property type="match status" value="1"/>
</dbReference>
<dbReference type="HAMAP" id="MF_00028">
    <property type="entry name" value="CobQ"/>
    <property type="match status" value="1"/>
</dbReference>
<dbReference type="InterPro" id="IPR029062">
    <property type="entry name" value="Class_I_gatase-like"/>
</dbReference>
<dbReference type="InterPro" id="IPR002586">
    <property type="entry name" value="CobQ/CobB/MinD/ParA_Nub-bd_dom"/>
</dbReference>
<dbReference type="InterPro" id="IPR033949">
    <property type="entry name" value="CobQ_GATase1"/>
</dbReference>
<dbReference type="InterPro" id="IPR047045">
    <property type="entry name" value="CobQ_N"/>
</dbReference>
<dbReference type="InterPro" id="IPR004459">
    <property type="entry name" value="CobQ_synth"/>
</dbReference>
<dbReference type="InterPro" id="IPR011698">
    <property type="entry name" value="GATase_3"/>
</dbReference>
<dbReference type="InterPro" id="IPR027417">
    <property type="entry name" value="P-loop_NTPase"/>
</dbReference>
<dbReference type="NCBIfam" id="TIGR00313">
    <property type="entry name" value="cobQ"/>
    <property type="match status" value="1"/>
</dbReference>
<dbReference type="NCBIfam" id="NF001989">
    <property type="entry name" value="PRK00784.1"/>
    <property type="match status" value="1"/>
</dbReference>
<dbReference type="PANTHER" id="PTHR21343:SF1">
    <property type="entry name" value="COBYRIC ACID SYNTHASE"/>
    <property type="match status" value="1"/>
</dbReference>
<dbReference type="PANTHER" id="PTHR21343">
    <property type="entry name" value="DETHIOBIOTIN SYNTHETASE"/>
    <property type="match status" value="1"/>
</dbReference>
<dbReference type="Pfam" id="PF01656">
    <property type="entry name" value="CbiA"/>
    <property type="match status" value="1"/>
</dbReference>
<dbReference type="Pfam" id="PF07685">
    <property type="entry name" value="GATase_3"/>
    <property type="match status" value="1"/>
</dbReference>
<dbReference type="SUPFAM" id="SSF52317">
    <property type="entry name" value="Class I glutamine amidotransferase-like"/>
    <property type="match status" value="1"/>
</dbReference>
<dbReference type="SUPFAM" id="SSF52540">
    <property type="entry name" value="P-loop containing nucleoside triphosphate hydrolases"/>
    <property type="match status" value="1"/>
</dbReference>
<dbReference type="PROSITE" id="PS51274">
    <property type="entry name" value="GATASE_COBBQ"/>
    <property type="match status" value="1"/>
</dbReference>
<accession>A4VJ40</accession>
<gene>
    <name evidence="1" type="primary">cobQ</name>
    <name type="ordered locus">PST_1297</name>
</gene>